<name>PSB6_ENCCU</name>
<gene>
    <name type="primary">PRE7</name>
    <name type="ordered locus">ECU07_1420</name>
</gene>
<accession>Q8SRH6</accession>
<dbReference type="EMBL" id="AL590447">
    <property type="protein sequence ID" value="CAD25674.1"/>
    <property type="molecule type" value="Genomic_DNA"/>
</dbReference>
<dbReference type="RefSeq" id="NP_586070.1">
    <property type="nucleotide sequence ID" value="NM_001041692.1"/>
</dbReference>
<dbReference type="SMR" id="Q8SRH6"/>
<dbReference type="FunCoup" id="Q8SRH6">
    <property type="interactions" value="270"/>
</dbReference>
<dbReference type="STRING" id="284813.Q8SRH6"/>
<dbReference type="GeneID" id="859500"/>
<dbReference type="KEGG" id="ecu:ECU07_1420"/>
<dbReference type="VEuPathDB" id="MicrosporidiaDB:ECU07_1420"/>
<dbReference type="HOGENOM" id="CLU_035750_1_1_1"/>
<dbReference type="InParanoid" id="Q8SRH6"/>
<dbReference type="OMA" id="QYQRRHL"/>
<dbReference type="OrthoDB" id="268479at2759"/>
<dbReference type="Proteomes" id="UP000000819">
    <property type="component" value="Chromosome VII"/>
</dbReference>
<dbReference type="GO" id="GO:0005737">
    <property type="term" value="C:cytoplasm"/>
    <property type="evidence" value="ECO:0007669"/>
    <property type="project" value="UniProtKB-SubCell"/>
</dbReference>
<dbReference type="GO" id="GO:0005634">
    <property type="term" value="C:nucleus"/>
    <property type="evidence" value="ECO:0007669"/>
    <property type="project" value="UniProtKB-SubCell"/>
</dbReference>
<dbReference type="GO" id="GO:0019774">
    <property type="term" value="C:proteasome core complex, beta-subunit complex"/>
    <property type="evidence" value="ECO:0000250"/>
    <property type="project" value="UniProtKB"/>
</dbReference>
<dbReference type="GO" id="GO:0051603">
    <property type="term" value="P:proteolysis involved in protein catabolic process"/>
    <property type="evidence" value="ECO:0007669"/>
    <property type="project" value="InterPro"/>
</dbReference>
<dbReference type="CDD" id="cd03757">
    <property type="entry name" value="proteasome_beta_type_1"/>
    <property type="match status" value="1"/>
</dbReference>
<dbReference type="Gene3D" id="3.60.20.10">
    <property type="entry name" value="Glutamine Phosphoribosylpyrophosphate, subunit 1, domain 1"/>
    <property type="match status" value="1"/>
</dbReference>
<dbReference type="InterPro" id="IPR029055">
    <property type="entry name" value="Ntn_hydrolases_N"/>
</dbReference>
<dbReference type="InterPro" id="IPR001353">
    <property type="entry name" value="Proteasome_sua/b"/>
</dbReference>
<dbReference type="InterPro" id="IPR023333">
    <property type="entry name" value="Proteasome_suB-type"/>
</dbReference>
<dbReference type="PANTHER" id="PTHR32194">
    <property type="entry name" value="METALLOPROTEASE TLDD"/>
    <property type="match status" value="1"/>
</dbReference>
<dbReference type="PANTHER" id="PTHR32194:SF2">
    <property type="entry name" value="PROTEASOME SUBUNIT BETA TYPE-1"/>
    <property type="match status" value="1"/>
</dbReference>
<dbReference type="Pfam" id="PF00227">
    <property type="entry name" value="Proteasome"/>
    <property type="match status" value="1"/>
</dbReference>
<dbReference type="SUPFAM" id="SSF56235">
    <property type="entry name" value="N-terminal nucleophile aminohydrolases (Ntn hydrolases)"/>
    <property type="match status" value="1"/>
</dbReference>
<dbReference type="PROSITE" id="PS51476">
    <property type="entry name" value="PROTEASOME_BETA_2"/>
    <property type="match status" value="1"/>
</dbReference>
<reference key="1">
    <citation type="journal article" date="2001" name="Nature">
        <title>Genome sequence and gene compaction of the eukaryote parasite Encephalitozoon cuniculi.</title>
        <authorList>
            <person name="Katinka M.D."/>
            <person name="Duprat S."/>
            <person name="Cornillot E."/>
            <person name="Metenier G."/>
            <person name="Thomarat F."/>
            <person name="Prensier G."/>
            <person name="Barbe V."/>
            <person name="Peyretaillade E."/>
            <person name="Brottier P."/>
            <person name="Wincker P."/>
            <person name="Delbac F."/>
            <person name="El Alaoui H."/>
            <person name="Peyret P."/>
            <person name="Saurin W."/>
            <person name="Gouy M."/>
            <person name="Weissenbach J."/>
            <person name="Vivares C.P."/>
        </authorList>
    </citation>
    <scope>NUCLEOTIDE SEQUENCE [LARGE SCALE GENOMIC DNA]</scope>
    <source>
        <strain>GB-M1</strain>
    </source>
</reference>
<reference key="2">
    <citation type="journal article" date="2006" name="Proteomics">
        <title>Proteomic analysis of the eukaryotic parasite Encephalitozoon cuniculi (microsporidia): a reference map for proteins expressed in late sporogonial stages.</title>
        <authorList>
            <person name="Brosson D."/>
            <person name="Kuhn L."/>
            <person name="Delbac F."/>
            <person name="Garin J."/>
            <person name="Vivares C.P."/>
            <person name="Texier C."/>
        </authorList>
    </citation>
    <scope>IDENTIFICATION BY MASS SPECTROMETRY [LARGE SCALE ANALYSIS]</scope>
    <scope>DEVELOPMENTAL STAGE</scope>
</reference>
<feature type="chain" id="PRO_0000382757" description="Probable proteasome subunit beta type-6">
    <location>
        <begin position="1"/>
        <end position="290"/>
    </location>
</feature>
<protein>
    <recommendedName>
        <fullName>Probable proteasome subunit beta type-6</fullName>
    </recommendedName>
    <alternativeName>
        <fullName>26S proteasome beta-type subunit PRE7</fullName>
    </alternativeName>
    <alternativeName>
        <fullName>Multicatalytic endopeptidase complex subunit PRE7</fullName>
    </alternativeName>
</protein>
<sequence length="290" mass="32454">MLSNKRGIHSASGGIDLRTLREYCLFEDFDVCMPFNPMGVPGGKGNRGSDGAIRGMLPLGDAMGDLFTAGKAGSTKMEDKERFDPYEDNSGTTICLKQGDFIVVAGDTRHSSSMVINSREMSKIFQVGDFLLTGTGFYADTHEVYVKMVYEIRQYEVDDSINIHSAANLLSKILYSKRFFPYYSFCVLSGFEKGKPYVYSYDPIGSFGSVTCVCSGSGRSMIQPLLDSFIDKKNWNNAEETQLSQEDCIRLVVKAFNSAAERDVKTKDNLEVCVMRENQVMRETFPLRRD</sequence>
<comment type="function">
    <text evidence="1">Non-catalytic component of the proteasome which degrades poly-ubiquitinated proteins in the cytoplasm and in the nucleus. It is essential for the regulated turnover of proteins and for the removal of misfolded proteins. The proteasome is a multicatalytic proteinase complex that is characterized by its ability to cleave peptides with Arg, Phe, Tyr, Leu, and Glu adjacent to the leaving group at neutral or slightly basic pH. It has an ATP-dependent proteolytic activity (By similarity).</text>
</comment>
<comment type="subunit">
    <text evidence="1">The 26S proteasome consists of a 20S proteasome core and two 19S regulatory subunits. The 20S proteasome core is composed of 28 subunits that are arranged in four stacked rings, resulting in a barrel-shaped structure. The two end rings are each formed by seven alpha subunits, and the two central rings are each formed by seven beta subunits. The catalytic chamber with the active sites is on the inside of the barrel (By similarity).</text>
</comment>
<comment type="subcellular location">
    <subcellularLocation>
        <location evidence="2">Cytoplasm</location>
    </subcellularLocation>
    <subcellularLocation>
        <location evidence="1">Nucleus</location>
    </subcellularLocation>
</comment>
<comment type="developmental stage">
    <text evidence="3">Expressed in late sporogonial stages.</text>
</comment>
<comment type="similarity">
    <text evidence="2">Belongs to the peptidase T1B family.</text>
</comment>
<keyword id="KW-0963">Cytoplasm</keyword>
<keyword id="KW-0539">Nucleus</keyword>
<keyword id="KW-0647">Proteasome</keyword>
<keyword id="KW-1185">Reference proteome</keyword>
<organism>
    <name type="scientific">Encephalitozoon cuniculi (strain GB-M1)</name>
    <name type="common">Microsporidian parasite</name>
    <dbReference type="NCBI Taxonomy" id="284813"/>
    <lineage>
        <taxon>Eukaryota</taxon>
        <taxon>Fungi</taxon>
        <taxon>Fungi incertae sedis</taxon>
        <taxon>Microsporidia</taxon>
        <taxon>Unikaryonidae</taxon>
        <taxon>Encephalitozoon</taxon>
    </lineage>
</organism>
<proteinExistence type="evidence at protein level"/>
<evidence type="ECO:0000250" key="1"/>
<evidence type="ECO:0000255" key="2">
    <source>
        <dbReference type="PROSITE-ProRule" id="PRU00809"/>
    </source>
</evidence>
<evidence type="ECO:0000269" key="3">
    <source>
    </source>
</evidence>